<reference key="1">
    <citation type="journal article" date="2008" name="PLoS ONE">
        <title>A recalibrated molecular clock and independent origins for the cholera pandemic clones.</title>
        <authorList>
            <person name="Feng L."/>
            <person name="Reeves P.R."/>
            <person name="Lan R."/>
            <person name="Ren Y."/>
            <person name="Gao C."/>
            <person name="Zhou Z."/>
            <person name="Ren Y."/>
            <person name="Cheng J."/>
            <person name="Wang W."/>
            <person name="Wang J."/>
            <person name="Qian W."/>
            <person name="Li D."/>
            <person name="Wang L."/>
        </authorList>
    </citation>
    <scope>NUCLEOTIDE SEQUENCE [LARGE SCALE GENOMIC DNA]</scope>
    <source>
        <strain>M66-2</strain>
    </source>
</reference>
<keyword id="KW-0963">Cytoplasm</keyword>
<keyword id="KW-0489">Methyltransferase</keyword>
<keyword id="KW-0698">rRNA processing</keyword>
<keyword id="KW-0949">S-adenosyl-L-methionine</keyword>
<keyword id="KW-0808">Transferase</keyword>
<sequence>MNTPLKPKHGQKTNRKPKANKPVVKKQQTKQPPTHKVQGEEVAAVKSGLHPRNRHRGQYDFPALIKVVPELQSHVMKNPKGQWTINFADPISVKLLNKALLVLHYGVTYWDIPEGFLCPPIPGRADYIHRVADLLLKGNPQLNHSQVRALDIGVGANCIYPIVGVTEYGWSWVGSDVDPVSIQQASLIVQSNSKLQGHIECRLQKNSQHIFNGIIGANERYTVTTCNPPFHASLADAQQGTQRKLTNLQANQRKKGRLATPTLSHSRLNFGGQKAELWCPGGEAAFIGKMAVESQQFAQQVLWFSTLISKGDNVRGMKKQLEKLGAQSIHVIEMAQGQKISRFIAWSFQNAEQRKLWWQAKC</sequence>
<feature type="chain" id="PRO_1000188537" description="Ribosomal RNA large subunit methyltransferase F">
    <location>
        <begin position="1"/>
        <end position="362"/>
    </location>
</feature>
<feature type="region of interest" description="Disordered" evidence="2">
    <location>
        <begin position="1"/>
        <end position="40"/>
    </location>
</feature>
<feature type="compositionally biased region" description="Basic residues" evidence="2">
    <location>
        <begin position="1"/>
        <end position="28"/>
    </location>
</feature>
<accession>C3LMU1</accession>
<comment type="function">
    <text evidence="1">Specifically methylates the adenine in position 1618 of 23S rRNA.</text>
</comment>
<comment type="catalytic activity">
    <reaction evidence="1">
        <text>adenosine(1618) in 23S rRNA + S-adenosyl-L-methionine = N(6)-methyladenosine(1618) in 23S rRNA + S-adenosyl-L-homocysteine + H(+)</text>
        <dbReference type="Rhea" id="RHEA:16497"/>
        <dbReference type="Rhea" id="RHEA-COMP:10229"/>
        <dbReference type="Rhea" id="RHEA-COMP:10231"/>
        <dbReference type="ChEBI" id="CHEBI:15378"/>
        <dbReference type="ChEBI" id="CHEBI:57856"/>
        <dbReference type="ChEBI" id="CHEBI:59789"/>
        <dbReference type="ChEBI" id="CHEBI:74411"/>
        <dbReference type="ChEBI" id="CHEBI:74449"/>
        <dbReference type="EC" id="2.1.1.181"/>
    </reaction>
</comment>
<comment type="subcellular location">
    <subcellularLocation>
        <location evidence="1">Cytoplasm</location>
    </subcellularLocation>
</comment>
<comment type="similarity">
    <text evidence="1">Belongs to the methyltransferase superfamily. METTL16/RlmF family.</text>
</comment>
<name>RLMF_VIBCM</name>
<organism>
    <name type="scientific">Vibrio cholerae serotype O1 (strain M66-2)</name>
    <dbReference type="NCBI Taxonomy" id="579112"/>
    <lineage>
        <taxon>Bacteria</taxon>
        <taxon>Pseudomonadati</taxon>
        <taxon>Pseudomonadota</taxon>
        <taxon>Gammaproteobacteria</taxon>
        <taxon>Vibrionales</taxon>
        <taxon>Vibrionaceae</taxon>
        <taxon>Vibrio</taxon>
    </lineage>
</organism>
<dbReference type="EC" id="2.1.1.181" evidence="1"/>
<dbReference type="EMBL" id="CP001233">
    <property type="protein sequence ID" value="ACP05867.1"/>
    <property type="molecule type" value="Genomic_DNA"/>
</dbReference>
<dbReference type="RefSeq" id="WP_001095834.1">
    <property type="nucleotide sequence ID" value="NC_012578.1"/>
</dbReference>
<dbReference type="SMR" id="C3LMU1"/>
<dbReference type="KEGG" id="vcm:VCM66_1554"/>
<dbReference type="HOGENOM" id="CLU_027534_3_0_6"/>
<dbReference type="Proteomes" id="UP000001217">
    <property type="component" value="Chromosome I"/>
</dbReference>
<dbReference type="GO" id="GO:0005737">
    <property type="term" value="C:cytoplasm"/>
    <property type="evidence" value="ECO:0007669"/>
    <property type="project" value="UniProtKB-SubCell"/>
</dbReference>
<dbReference type="GO" id="GO:0052907">
    <property type="term" value="F:23S rRNA (adenine(1618)-N(6))-methyltransferase activity"/>
    <property type="evidence" value="ECO:0007669"/>
    <property type="project" value="UniProtKB-EC"/>
</dbReference>
<dbReference type="GO" id="GO:0070475">
    <property type="term" value="P:rRNA base methylation"/>
    <property type="evidence" value="ECO:0007669"/>
    <property type="project" value="TreeGrafter"/>
</dbReference>
<dbReference type="FunFam" id="3.40.50.150:FF:000045">
    <property type="entry name" value="Ribosomal RNA large subunit methyltransferase F"/>
    <property type="match status" value="1"/>
</dbReference>
<dbReference type="Gene3D" id="3.40.50.150">
    <property type="entry name" value="Vaccinia Virus protein VP39"/>
    <property type="match status" value="1"/>
</dbReference>
<dbReference type="HAMAP" id="MF_01848">
    <property type="entry name" value="23SrRNA_methyltr_F"/>
    <property type="match status" value="1"/>
</dbReference>
<dbReference type="InterPro" id="IPR010286">
    <property type="entry name" value="METTL16/RlmF"/>
</dbReference>
<dbReference type="InterPro" id="IPR016909">
    <property type="entry name" value="rRNA_lsu_MeTfrase_F"/>
</dbReference>
<dbReference type="InterPro" id="IPR029063">
    <property type="entry name" value="SAM-dependent_MTases_sf"/>
</dbReference>
<dbReference type="NCBIfam" id="NF008725">
    <property type="entry name" value="PRK11727.1"/>
    <property type="match status" value="1"/>
</dbReference>
<dbReference type="PANTHER" id="PTHR13393:SF0">
    <property type="entry name" value="RNA N6-ADENOSINE-METHYLTRANSFERASE METTL16"/>
    <property type="match status" value="1"/>
</dbReference>
<dbReference type="PANTHER" id="PTHR13393">
    <property type="entry name" value="SAM-DEPENDENT METHYLTRANSFERASE"/>
    <property type="match status" value="1"/>
</dbReference>
<dbReference type="Pfam" id="PF05971">
    <property type="entry name" value="Methyltransf_10"/>
    <property type="match status" value="1"/>
</dbReference>
<dbReference type="PIRSF" id="PIRSF029038">
    <property type="entry name" value="Mtase_YbiN_prd"/>
    <property type="match status" value="1"/>
</dbReference>
<dbReference type="SUPFAM" id="SSF53335">
    <property type="entry name" value="S-adenosyl-L-methionine-dependent methyltransferases"/>
    <property type="match status" value="1"/>
</dbReference>
<proteinExistence type="inferred from homology"/>
<protein>
    <recommendedName>
        <fullName evidence="1">Ribosomal RNA large subunit methyltransferase F</fullName>
        <ecNumber evidence="1">2.1.1.181</ecNumber>
    </recommendedName>
    <alternativeName>
        <fullName evidence="1">23S rRNA mA1618 methyltransferase</fullName>
    </alternativeName>
    <alternativeName>
        <fullName evidence="1">rRNA adenine N-6-methyltransferase</fullName>
    </alternativeName>
</protein>
<evidence type="ECO:0000255" key="1">
    <source>
        <dbReference type="HAMAP-Rule" id="MF_01848"/>
    </source>
</evidence>
<evidence type="ECO:0000256" key="2">
    <source>
        <dbReference type="SAM" id="MobiDB-lite"/>
    </source>
</evidence>
<gene>
    <name evidence="1" type="primary">rlmF</name>
    <name type="ordered locus">VCM66_1554</name>
</gene>